<reference key="1">
    <citation type="journal article" date="2008" name="Genome Res.">
        <title>Comparative genome analysis of Salmonella enteritidis PT4 and Salmonella gallinarum 287/91 provides insights into evolutionary and host adaptation pathways.</title>
        <authorList>
            <person name="Thomson N.R."/>
            <person name="Clayton D.J."/>
            <person name="Windhorst D."/>
            <person name="Vernikos G."/>
            <person name="Davidson S."/>
            <person name="Churcher C."/>
            <person name="Quail M.A."/>
            <person name="Stevens M."/>
            <person name="Jones M.A."/>
            <person name="Watson M."/>
            <person name="Barron A."/>
            <person name="Layton A."/>
            <person name="Pickard D."/>
            <person name="Kingsley R.A."/>
            <person name="Bignell A."/>
            <person name="Clark L."/>
            <person name="Harris B."/>
            <person name="Ormond D."/>
            <person name="Abdellah Z."/>
            <person name="Brooks K."/>
            <person name="Cherevach I."/>
            <person name="Chillingworth T."/>
            <person name="Woodward J."/>
            <person name="Norberczak H."/>
            <person name="Lord A."/>
            <person name="Arrowsmith C."/>
            <person name="Jagels K."/>
            <person name="Moule S."/>
            <person name="Mungall K."/>
            <person name="Saunders M."/>
            <person name="Whitehead S."/>
            <person name="Chabalgoity J.A."/>
            <person name="Maskell D."/>
            <person name="Humphreys T."/>
            <person name="Roberts M."/>
            <person name="Barrow P.A."/>
            <person name="Dougan G."/>
            <person name="Parkhill J."/>
        </authorList>
    </citation>
    <scope>NUCLEOTIDE SEQUENCE [LARGE SCALE GENOMIC DNA]</scope>
    <source>
        <strain>287/91 / NCTC 13346</strain>
    </source>
</reference>
<protein>
    <recommendedName>
        <fullName evidence="1">Small ribosomal subunit protein uS17</fullName>
    </recommendedName>
    <alternativeName>
        <fullName evidence="2">30S ribosomal protein S17</fullName>
    </alternativeName>
</protein>
<dbReference type="EMBL" id="AM933173">
    <property type="protein sequence ID" value="CAR39778.1"/>
    <property type="molecule type" value="Genomic_DNA"/>
</dbReference>
<dbReference type="RefSeq" id="WP_000130101.1">
    <property type="nucleotide sequence ID" value="NC_011274.1"/>
</dbReference>
<dbReference type="SMR" id="B5RH24"/>
<dbReference type="GeneID" id="66757766"/>
<dbReference type="KEGG" id="seg:SG4008"/>
<dbReference type="HOGENOM" id="CLU_073626_1_1_6"/>
<dbReference type="Proteomes" id="UP000008321">
    <property type="component" value="Chromosome"/>
</dbReference>
<dbReference type="GO" id="GO:0022627">
    <property type="term" value="C:cytosolic small ribosomal subunit"/>
    <property type="evidence" value="ECO:0007669"/>
    <property type="project" value="TreeGrafter"/>
</dbReference>
<dbReference type="GO" id="GO:0019843">
    <property type="term" value="F:rRNA binding"/>
    <property type="evidence" value="ECO:0007669"/>
    <property type="project" value="UniProtKB-UniRule"/>
</dbReference>
<dbReference type="GO" id="GO:0003735">
    <property type="term" value="F:structural constituent of ribosome"/>
    <property type="evidence" value="ECO:0007669"/>
    <property type="project" value="InterPro"/>
</dbReference>
<dbReference type="GO" id="GO:0006412">
    <property type="term" value="P:translation"/>
    <property type="evidence" value="ECO:0007669"/>
    <property type="project" value="UniProtKB-UniRule"/>
</dbReference>
<dbReference type="CDD" id="cd00364">
    <property type="entry name" value="Ribosomal_uS17"/>
    <property type="match status" value="1"/>
</dbReference>
<dbReference type="FunFam" id="2.40.50.140:FF:000014">
    <property type="entry name" value="30S ribosomal protein S17"/>
    <property type="match status" value="1"/>
</dbReference>
<dbReference type="Gene3D" id="2.40.50.140">
    <property type="entry name" value="Nucleic acid-binding proteins"/>
    <property type="match status" value="1"/>
</dbReference>
<dbReference type="HAMAP" id="MF_01345_B">
    <property type="entry name" value="Ribosomal_uS17_B"/>
    <property type="match status" value="1"/>
</dbReference>
<dbReference type="InterPro" id="IPR012340">
    <property type="entry name" value="NA-bd_OB-fold"/>
</dbReference>
<dbReference type="InterPro" id="IPR000266">
    <property type="entry name" value="Ribosomal_uS17"/>
</dbReference>
<dbReference type="InterPro" id="IPR019984">
    <property type="entry name" value="Ribosomal_uS17_bact/chlr"/>
</dbReference>
<dbReference type="InterPro" id="IPR019979">
    <property type="entry name" value="Ribosomal_uS17_CS"/>
</dbReference>
<dbReference type="NCBIfam" id="NF004123">
    <property type="entry name" value="PRK05610.1"/>
    <property type="match status" value="1"/>
</dbReference>
<dbReference type="NCBIfam" id="TIGR03635">
    <property type="entry name" value="uS17_bact"/>
    <property type="match status" value="1"/>
</dbReference>
<dbReference type="PANTHER" id="PTHR10744">
    <property type="entry name" value="40S RIBOSOMAL PROTEIN S11 FAMILY MEMBER"/>
    <property type="match status" value="1"/>
</dbReference>
<dbReference type="PANTHER" id="PTHR10744:SF1">
    <property type="entry name" value="SMALL RIBOSOMAL SUBUNIT PROTEIN US17M"/>
    <property type="match status" value="1"/>
</dbReference>
<dbReference type="Pfam" id="PF00366">
    <property type="entry name" value="Ribosomal_S17"/>
    <property type="match status" value="1"/>
</dbReference>
<dbReference type="PRINTS" id="PR00973">
    <property type="entry name" value="RIBOSOMALS17"/>
</dbReference>
<dbReference type="SUPFAM" id="SSF50249">
    <property type="entry name" value="Nucleic acid-binding proteins"/>
    <property type="match status" value="1"/>
</dbReference>
<dbReference type="PROSITE" id="PS00056">
    <property type="entry name" value="RIBOSOMAL_S17"/>
    <property type="match status" value="1"/>
</dbReference>
<proteinExistence type="inferred from homology"/>
<sequence>MTDKIRTLQGRVVSDKMEKSIVVAIERFVKHPIYGKFIKRTTKMHVHDENNECGIGDVVEIRECRPLSKTKSWTLVRVVEKAVL</sequence>
<evidence type="ECO:0000255" key="1">
    <source>
        <dbReference type="HAMAP-Rule" id="MF_01345"/>
    </source>
</evidence>
<evidence type="ECO:0000305" key="2"/>
<accession>B5RH24</accession>
<comment type="function">
    <text evidence="1">One of the primary rRNA binding proteins, it binds specifically to the 5'-end of 16S ribosomal RNA.</text>
</comment>
<comment type="subunit">
    <text evidence="1">Part of the 30S ribosomal subunit.</text>
</comment>
<comment type="similarity">
    <text evidence="1">Belongs to the universal ribosomal protein uS17 family.</text>
</comment>
<keyword id="KW-0687">Ribonucleoprotein</keyword>
<keyword id="KW-0689">Ribosomal protein</keyword>
<keyword id="KW-0694">RNA-binding</keyword>
<keyword id="KW-0699">rRNA-binding</keyword>
<gene>
    <name evidence="1" type="primary">rpsQ</name>
    <name type="ordered locus">SG4008</name>
</gene>
<organism>
    <name type="scientific">Salmonella gallinarum (strain 287/91 / NCTC 13346)</name>
    <dbReference type="NCBI Taxonomy" id="550538"/>
    <lineage>
        <taxon>Bacteria</taxon>
        <taxon>Pseudomonadati</taxon>
        <taxon>Pseudomonadota</taxon>
        <taxon>Gammaproteobacteria</taxon>
        <taxon>Enterobacterales</taxon>
        <taxon>Enterobacteriaceae</taxon>
        <taxon>Salmonella</taxon>
    </lineage>
</organism>
<name>RS17_SALG2</name>
<feature type="chain" id="PRO_1000143297" description="Small ribosomal subunit protein uS17">
    <location>
        <begin position="1"/>
        <end position="84"/>
    </location>
</feature>